<evidence type="ECO:0000250" key="1"/>
<evidence type="ECO:0000250" key="2">
    <source>
        <dbReference type="UniProtKB" id="P38153"/>
    </source>
</evidence>
<evidence type="ECO:0000255" key="3">
    <source>
        <dbReference type="PROSITE-ProRule" id="PRU00404"/>
    </source>
</evidence>
<evidence type="ECO:0000305" key="4"/>
<keyword id="KW-0968">Cytoplasmic vesicle</keyword>
<keyword id="KW-0333">Golgi apparatus</keyword>
<keyword id="KW-0472">Membrane</keyword>
<keyword id="KW-0653">Protein transport</keyword>
<keyword id="KW-1185">Reference proteome</keyword>
<keyword id="KW-0813">Transport</keyword>
<proteinExistence type="inferred from homology"/>
<dbReference type="EMBL" id="AE016820">
    <property type="protein sequence ID" value="AAS54429.2"/>
    <property type="molecule type" value="Genomic_DNA"/>
</dbReference>
<dbReference type="RefSeq" id="NP_986605.2">
    <property type="nucleotide sequence ID" value="NM_211667.2"/>
</dbReference>
<dbReference type="SMR" id="Q750L8"/>
<dbReference type="FunCoup" id="Q750L8">
    <property type="interactions" value="165"/>
</dbReference>
<dbReference type="STRING" id="284811.Q750L8"/>
<dbReference type="EnsemblFungi" id="AAS54429">
    <property type="protein sequence ID" value="AAS54429"/>
    <property type="gene ID" value="AGOS_AGL061W"/>
</dbReference>
<dbReference type="GeneID" id="4622904"/>
<dbReference type="KEGG" id="ago:AGOS_AGL061W"/>
<dbReference type="eggNOG" id="KOG2740">
    <property type="taxonomic scope" value="Eukaryota"/>
</dbReference>
<dbReference type="HOGENOM" id="CLU_026449_0_0_1"/>
<dbReference type="InParanoid" id="Q750L8"/>
<dbReference type="OMA" id="LNEMCDG"/>
<dbReference type="OrthoDB" id="870at2759"/>
<dbReference type="Proteomes" id="UP000000591">
    <property type="component" value="Chromosome VII"/>
</dbReference>
<dbReference type="GO" id="GO:0030123">
    <property type="term" value="C:AP-3 adaptor complex"/>
    <property type="evidence" value="ECO:0007669"/>
    <property type="project" value="EnsemblFungi"/>
</dbReference>
<dbReference type="GO" id="GO:0030131">
    <property type="term" value="C:clathrin adaptor complex"/>
    <property type="evidence" value="ECO:0007669"/>
    <property type="project" value="InterPro"/>
</dbReference>
<dbReference type="GO" id="GO:0031410">
    <property type="term" value="C:cytoplasmic vesicle"/>
    <property type="evidence" value="ECO:0000318"/>
    <property type="project" value="GO_Central"/>
</dbReference>
<dbReference type="GO" id="GO:0030659">
    <property type="term" value="C:cytoplasmic vesicle membrane"/>
    <property type="evidence" value="ECO:0007669"/>
    <property type="project" value="UniProtKB-SubCell"/>
</dbReference>
<dbReference type="GO" id="GO:0005794">
    <property type="term" value="C:Golgi apparatus"/>
    <property type="evidence" value="ECO:0007669"/>
    <property type="project" value="UniProtKB-SubCell"/>
</dbReference>
<dbReference type="GO" id="GO:0006897">
    <property type="term" value="P:endocytosis"/>
    <property type="evidence" value="ECO:0000318"/>
    <property type="project" value="GO_Central"/>
</dbReference>
<dbReference type="GO" id="GO:0006896">
    <property type="term" value="P:Golgi to vacuole transport"/>
    <property type="evidence" value="ECO:0007669"/>
    <property type="project" value="EnsemblFungi"/>
</dbReference>
<dbReference type="GO" id="GO:0006623">
    <property type="term" value="P:protein targeting to vacuole"/>
    <property type="evidence" value="ECO:0007669"/>
    <property type="project" value="EnsemblFungi"/>
</dbReference>
<dbReference type="CDD" id="cd09252">
    <property type="entry name" value="AP-3_Mu3_Cterm"/>
    <property type="match status" value="1"/>
</dbReference>
<dbReference type="Gene3D" id="3.30.450.60">
    <property type="match status" value="1"/>
</dbReference>
<dbReference type="Gene3D" id="2.60.40.1170">
    <property type="entry name" value="Mu homology domain, subdomain B"/>
    <property type="match status" value="2"/>
</dbReference>
<dbReference type="InterPro" id="IPR050431">
    <property type="entry name" value="Adaptor_comp_med_subunit"/>
</dbReference>
<dbReference type="InterPro" id="IPR036168">
    <property type="entry name" value="AP2_Mu_C_sf"/>
</dbReference>
<dbReference type="InterPro" id="IPR001392">
    <property type="entry name" value="Clathrin_mu"/>
</dbReference>
<dbReference type="InterPro" id="IPR018240">
    <property type="entry name" value="Clathrin_mu_CS"/>
</dbReference>
<dbReference type="InterPro" id="IPR011012">
    <property type="entry name" value="Longin-like_dom_sf"/>
</dbReference>
<dbReference type="InterPro" id="IPR028565">
    <property type="entry name" value="MHD"/>
</dbReference>
<dbReference type="PANTHER" id="PTHR10529">
    <property type="entry name" value="AP COMPLEX SUBUNIT MU"/>
    <property type="match status" value="1"/>
</dbReference>
<dbReference type="Pfam" id="PF00928">
    <property type="entry name" value="Adap_comp_sub"/>
    <property type="match status" value="1"/>
</dbReference>
<dbReference type="PIRSF" id="PIRSF005992">
    <property type="entry name" value="Clathrin_mu"/>
    <property type="match status" value="1"/>
</dbReference>
<dbReference type="SUPFAM" id="SSF49447">
    <property type="entry name" value="Second domain of Mu2 adaptin subunit (ap50) of ap2 adaptor"/>
    <property type="match status" value="1"/>
</dbReference>
<dbReference type="SUPFAM" id="SSF64356">
    <property type="entry name" value="SNARE-like"/>
    <property type="match status" value="1"/>
</dbReference>
<dbReference type="PROSITE" id="PS00990">
    <property type="entry name" value="CLAT_ADAPTOR_M_1"/>
    <property type="match status" value="1"/>
</dbReference>
<dbReference type="PROSITE" id="PS51072">
    <property type="entry name" value="MHD"/>
    <property type="match status" value="1"/>
</dbReference>
<feature type="chain" id="PRO_0000227678" description="AP-3 complex subunit mu">
    <location>
        <begin position="1"/>
        <end position="451"/>
    </location>
</feature>
<feature type="domain" description="MHD" evidence="3">
    <location>
        <begin position="191"/>
        <end position="450"/>
    </location>
</feature>
<reference key="1">
    <citation type="journal article" date="2004" name="Science">
        <title>The Ashbya gossypii genome as a tool for mapping the ancient Saccharomyces cerevisiae genome.</title>
        <authorList>
            <person name="Dietrich F.S."/>
            <person name="Voegeli S."/>
            <person name="Brachat S."/>
            <person name="Lerch A."/>
            <person name="Gates K."/>
            <person name="Steiner S."/>
            <person name="Mohr C."/>
            <person name="Poehlmann R."/>
            <person name="Luedi P."/>
            <person name="Choi S."/>
            <person name="Wing R.A."/>
            <person name="Flavier A."/>
            <person name="Gaffney T.D."/>
            <person name="Philippsen P."/>
        </authorList>
    </citation>
    <scope>NUCLEOTIDE SEQUENCE [LARGE SCALE GENOMIC DNA]</scope>
    <source>
        <strain>ATCC 10895 / CBS 109.51 / FGSC 9923 / NRRL Y-1056</strain>
    </source>
</reference>
<reference key="2">
    <citation type="journal article" date="2013" name="G3 (Bethesda)">
        <title>Genomes of Ashbya fungi isolated from insects reveal four mating-type loci, numerous translocations, lack of transposons, and distinct gene duplications.</title>
        <authorList>
            <person name="Dietrich F.S."/>
            <person name="Voegeli S."/>
            <person name="Kuo S."/>
            <person name="Philippsen P."/>
        </authorList>
    </citation>
    <scope>GENOME REANNOTATION</scope>
    <source>
        <strain>ATCC 10895 / CBS 109.51 / FGSC 9923 / NRRL Y-1056</strain>
    </source>
</reference>
<gene>
    <name type="primary">APM3</name>
    <name type="ordered locus">AGL061W</name>
</gene>
<comment type="function">
    <text evidence="1">Part of the AP-3 complex, an adaptor-related complex which is not clathrin-associated. The complex is associated with the Golgi region as well as more peripheral structures. It facilitates the budding of vesicles from the Golgi membrane and may be directly involved in trafficking to the vacuole (By similarity).</text>
</comment>
<comment type="subunit">
    <text evidence="1">Adaptor protein complex 3 (AP-3) is a heterotetramer composed of 2 large adaptins (APL5 and APL6), a medium adaptin (APM3) and a small adaptin (APS3).</text>
</comment>
<comment type="subcellular location">
    <subcellularLocation>
        <location evidence="2">Golgi apparatus</location>
    </subcellularLocation>
    <subcellularLocation>
        <location evidence="2">Cytoplasmic vesicle membrane</location>
        <topology evidence="2">Peripheral membrane protein</topology>
        <orientation evidence="2">Cytoplasmic side</orientation>
    </subcellularLocation>
    <text evidence="2">Component of the coat surrounding the cytoplasmic face of coated vesicles located at the Golgi complex.</text>
</comment>
<comment type="similarity">
    <text evidence="4">Belongs to the adaptor complexes medium subunit family.</text>
</comment>
<name>AP3M_EREGS</name>
<protein>
    <recommendedName>
        <fullName>AP-3 complex subunit mu</fullName>
    </recommendedName>
    <alternativeName>
        <fullName>AP-3 adaptor complex mu3A subunit</fullName>
    </alternativeName>
    <alternativeName>
        <fullName>Adaptor-related protein complex 3 subunit mu</fullName>
    </alternativeName>
    <alternativeName>
        <fullName>Mu-adaptin 3A</fullName>
    </alternativeName>
    <alternativeName>
        <fullName>Mu3-adaptin</fullName>
    </alternativeName>
</protein>
<organism>
    <name type="scientific">Eremothecium gossypii (strain ATCC 10895 / CBS 109.51 / FGSC 9923 / NRRL Y-1056)</name>
    <name type="common">Yeast</name>
    <name type="synonym">Ashbya gossypii</name>
    <dbReference type="NCBI Taxonomy" id="284811"/>
    <lineage>
        <taxon>Eukaryota</taxon>
        <taxon>Fungi</taxon>
        <taxon>Dikarya</taxon>
        <taxon>Ascomycota</taxon>
        <taxon>Saccharomycotina</taxon>
        <taxon>Saccharomycetes</taxon>
        <taxon>Saccharomycetales</taxon>
        <taxon>Saccharomycetaceae</taxon>
        <taxon>Eremothecium</taxon>
    </lineage>
</organism>
<accession>Q750L8</accession>
<sequence length="451" mass="49229">MYTSIYITDSKKNLVFEYLLTSQAPTFQQLCSKIAGRDAAMDAMVAISKDMSLYRQAVGPEKLWYWALCQACGDPLEPQMFLAQYHQVLIEYFDKEALTVKKLVNNADRLALLLHAMLDAGEVAVTDSNRLRQLVPLRNDLSTILNSATKTLANTVKYADSKQLFGAPVATGKVEAGQTVPWRTADCRYVNNEIYVDLVETVNATLRQKGSSLTLINGSLSGKIDVKCYLSGNPTVQLKLRTSGHPLDNSALHRCVELGEAGVATMNFVPPDGRFTLAEYAIDLSAISQAARRLTNLGLVTVSLASGLGQHRDEFEIKVIIGNSTQVAAIEDLRITVYFPDISDAAKIKILRTTHGGWESDLSRVRGVWAFDKQTAVGSVPVLRGCVENPESTPHAPPVFPSHLAVSYSHVGQLPSGIRVDTIALSDLPPGSKPFKGVKYTSRAGDYIVRA</sequence>